<gene>
    <name type="primary">comGF</name>
    <name type="synonym">comG6</name>
    <name type="ordered locus">BSU24680</name>
</gene>
<feature type="chain" id="PRO_0000090011" description="Competence protein ComGF">
    <location>
        <begin position="1"/>
        <end position="127"/>
    </location>
</feature>
<accession>P25958</accession>
<accession>O32021</accession>
<evidence type="ECO:0000250" key="1">
    <source>
        <dbReference type="UniProtKB" id="Q8DN90"/>
    </source>
</evidence>
<evidence type="ECO:0000269" key="2">
    <source>
    </source>
</evidence>
<evidence type="ECO:0000269" key="3">
    <source>
    </source>
</evidence>
<evidence type="ECO:0000305" key="4"/>
<name>COMGF_BACSU</name>
<proteinExistence type="inferred from homology"/>
<reference key="1">
    <citation type="journal article" date="1989" name="J. Bacteriol.">
        <title>Nucleotide sequence and genetic organization of the Bacillus subtilis comG operon.</title>
        <authorList>
            <person name="Albano M."/>
            <person name="Breitling R."/>
            <person name="Dubnau D.A."/>
        </authorList>
    </citation>
    <scope>NUCLEOTIDE SEQUENCE [GENOMIC DNA]</scope>
</reference>
<reference key="2">
    <citation type="journal article" date="1997" name="Nature">
        <title>The complete genome sequence of the Gram-positive bacterium Bacillus subtilis.</title>
        <authorList>
            <person name="Kunst F."/>
            <person name="Ogasawara N."/>
            <person name="Moszer I."/>
            <person name="Albertini A.M."/>
            <person name="Alloni G."/>
            <person name="Azevedo V."/>
            <person name="Bertero M.G."/>
            <person name="Bessieres P."/>
            <person name="Bolotin A."/>
            <person name="Borchert S."/>
            <person name="Borriss R."/>
            <person name="Boursier L."/>
            <person name="Brans A."/>
            <person name="Braun M."/>
            <person name="Brignell S.C."/>
            <person name="Bron S."/>
            <person name="Brouillet S."/>
            <person name="Bruschi C.V."/>
            <person name="Caldwell B."/>
            <person name="Capuano V."/>
            <person name="Carter N.M."/>
            <person name="Choi S.-K."/>
            <person name="Codani J.-J."/>
            <person name="Connerton I.F."/>
            <person name="Cummings N.J."/>
            <person name="Daniel R.A."/>
            <person name="Denizot F."/>
            <person name="Devine K.M."/>
            <person name="Duesterhoeft A."/>
            <person name="Ehrlich S.D."/>
            <person name="Emmerson P.T."/>
            <person name="Entian K.-D."/>
            <person name="Errington J."/>
            <person name="Fabret C."/>
            <person name="Ferrari E."/>
            <person name="Foulger D."/>
            <person name="Fritz C."/>
            <person name="Fujita M."/>
            <person name="Fujita Y."/>
            <person name="Fuma S."/>
            <person name="Galizzi A."/>
            <person name="Galleron N."/>
            <person name="Ghim S.-Y."/>
            <person name="Glaser P."/>
            <person name="Goffeau A."/>
            <person name="Golightly E.J."/>
            <person name="Grandi G."/>
            <person name="Guiseppi G."/>
            <person name="Guy B.J."/>
            <person name="Haga K."/>
            <person name="Haiech J."/>
            <person name="Harwood C.R."/>
            <person name="Henaut A."/>
            <person name="Hilbert H."/>
            <person name="Holsappel S."/>
            <person name="Hosono S."/>
            <person name="Hullo M.-F."/>
            <person name="Itaya M."/>
            <person name="Jones L.-M."/>
            <person name="Joris B."/>
            <person name="Karamata D."/>
            <person name="Kasahara Y."/>
            <person name="Klaerr-Blanchard M."/>
            <person name="Klein C."/>
            <person name="Kobayashi Y."/>
            <person name="Koetter P."/>
            <person name="Koningstein G."/>
            <person name="Krogh S."/>
            <person name="Kumano M."/>
            <person name="Kurita K."/>
            <person name="Lapidus A."/>
            <person name="Lardinois S."/>
            <person name="Lauber J."/>
            <person name="Lazarevic V."/>
            <person name="Lee S.-M."/>
            <person name="Levine A."/>
            <person name="Liu H."/>
            <person name="Masuda S."/>
            <person name="Mauel C."/>
            <person name="Medigue C."/>
            <person name="Medina N."/>
            <person name="Mellado R.P."/>
            <person name="Mizuno M."/>
            <person name="Moestl D."/>
            <person name="Nakai S."/>
            <person name="Noback M."/>
            <person name="Noone D."/>
            <person name="O'Reilly M."/>
            <person name="Ogawa K."/>
            <person name="Ogiwara A."/>
            <person name="Oudega B."/>
            <person name="Park S.-H."/>
            <person name="Parro V."/>
            <person name="Pohl T.M."/>
            <person name="Portetelle D."/>
            <person name="Porwollik S."/>
            <person name="Prescott A.M."/>
            <person name="Presecan E."/>
            <person name="Pujic P."/>
            <person name="Purnelle B."/>
            <person name="Rapoport G."/>
            <person name="Rey M."/>
            <person name="Reynolds S."/>
            <person name="Rieger M."/>
            <person name="Rivolta C."/>
            <person name="Rocha E."/>
            <person name="Roche B."/>
            <person name="Rose M."/>
            <person name="Sadaie Y."/>
            <person name="Sato T."/>
            <person name="Scanlan E."/>
            <person name="Schleich S."/>
            <person name="Schroeter R."/>
            <person name="Scoffone F."/>
            <person name="Sekiguchi J."/>
            <person name="Sekowska A."/>
            <person name="Seror S.J."/>
            <person name="Serror P."/>
            <person name="Shin B.-S."/>
            <person name="Soldo B."/>
            <person name="Sorokin A."/>
            <person name="Tacconi E."/>
            <person name="Takagi T."/>
            <person name="Takahashi H."/>
            <person name="Takemaru K."/>
            <person name="Takeuchi M."/>
            <person name="Tamakoshi A."/>
            <person name="Tanaka T."/>
            <person name="Terpstra P."/>
            <person name="Tognoni A."/>
            <person name="Tosato V."/>
            <person name="Uchiyama S."/>
            <person name="Vandenbol M."/>
            <person name="Vannier F."/>
            <person name="Vassarotti A."/>
            <person name="Viari A."/>
            <person name="Wambutt R."/>
            <person name="Wedler E."/>
            <person name="Wedler H."/>
            <person name="Weitzenegger T."/>
            <person name="Winters P."/>
            <person name="Wipat A."/>
            <person name="Yamamoto H."/>
            <person name="Yamane K."/>
            <person name="Yasumoto K."/>
            <person name="Yata K."/>
            <person name="Yoshida K."/>
            <person name="Yoshikawa H.-F."/>
            <person name="Zumstein E."/>
            <person name="Yoshikawa H."/>
            <person name="Danchin A."/>
        </authorList>
    </citation>
    <scope>NUCLEOTIDE SEQUENCE [LARGE SCALE GENOMIC DNA]</scope>
    <source>
        <strain>168</strain>
    </source>
</reference>
<reference key="3">
    <citation type="journal article" date="1998" name="J. Bacteriol.">
        <title>All seven comG open reading frames are required for DNA binding during transformation of competent Bacillus subtilis.</title>
        <authorList>
            <person name="Chung Y.S."/>
            <person name="Dubnau D.A."/>
        </authorList>
    </citation>
    <scope>FUNCTION</scope>
</reference>
<reference key="4">
    <citation type="journal article" date="1998" name="Mol. Microbiol.">
        <title>Cell surface localization and processing of the ComG proteins, required for DNA binding during transformation of Bacillus subtilis.</title>
        <authorList>
            <person name="Chung Y.S."/>
            <person name="Breidt F."/>
            <person name="Dubnau D.A."/>
        </authorList>
    </citation>
    <scope>SUBCELLULAR LOCATION</scope>
</reference>
<sequence length="127" mass="14281">MLISGSLAAIIHLFLSRQQEHDGFTQQEWMISIEQMMNECKESQAVKTAEHGSVLICTNLSGQDIRFDIYHSMIRKRVDGKGHVPILDHITAMKADIENGVVLLKIESEDQKVYQTAFPVYSYLGGG</sequence>
<comment type="function">
    <text evidence="1 2 4">Required for formation of the type IV-like pilus (T4P) that plays a role in transformation. Involved in transformation (By similarity). Transformation pili are dynamically extended and retracted, perhaps thereby promoting DNA uptake and transformation (Probable). Required for transformation and DNA binding.</text>
</comment>
<comment type="subunit">
    <text evidence="1">The transformation pili are flexible filaments, consisting mainly of the major pilin ComGC and smaller amounts of the minor pilins, including at least ComGD, ComGF and ComGG. Interacts with ComGD. Interacts with ComGG.</text>
</comment>
<comment type="subcellular location">
    <subcellularLocation>
        <location evidence="3">Cell membrane</location>
        <topology evidence="3">Peripheral membrane protein</topology>
    </subcellularLocation>
    <subcellularLocation>
        <location evidence="1">Fimbrium</location>
    </subcellularLocation>
    <text evidence="1">Localized all along the transformation pilus.</text>
</comment>
<comment type="sequence caution" evidence="4">
    <conflict type="erroneous initiation">
        <sequence resource="EMBL-CDS" id="AAA83372"/>
    </conflict>
</comment>
<keyword id="KW-1003">Cell membrane</keyword>
<keyword id="KW-0178">Competence</keyword>
<keyword id="KW-0281">Fimbrium</keyword>
<keyword id="KW-0472">Membrane</keyword>
<keyword id="KW-1185">Reference proteome</keyword>
<organism>
    <name type="scientific">Bacillus subtilis (strain 168)</name>
    <dbReference type="NCBI Taxonomy" id="224308"/>
    <lineage>
        <taxon>Bacteria</taxon>
        <taxon>Bacillati</taxon>
        <taxon>Bacillota</taxon>
        <taxon>Bacilli</taxon>
        <taxon>Bacillales</taxon>
        <taxon>Bacillaceae</taxon>
        <taxon>Bacillus</taxon>
    </lineage>
</organism>
<protein>
    <recommendedName>
        <fullName evidence="4">Competence protein ComGF</fullName>
    </recommendedName>
    <alternativeName>
        <fullName>ComG operon protein 6</fullName>
    </alternativeName>
    <alternativeName>
        <fullName>Minor pilin ComGF</fullName>
    </alternativeName>
</protein>
<dbReference type="EMBL" id="M29691">
    <property type="protein sequence ID" value="AAA83372.1"/>
    <property type="status" value="ALT_INIT"/>
    <property type="molecule type" value="Genomic_DNA"/>
</dbReference>
<dbReference type="EMBL" id="AL009126">
    <property type="protein sequence ID" value="CAB14399.1"/>
    <property type="molecule type" value="Genomic_DNA"/>
</dbReference>
<dbReference type="PIR" id="G30338">
    <property type="entry name" value="G30338"/>
</dbReference>
<dbReference type="PIR" id="G69603">
    <property type="entry name" value="G69603"/>
</dbReference>
<dbReference type="RefSeq" id="NP_390348.1">
    <property type="nucleotide sequence ID" value="NC_000964.3"/>
</dbReference>
<dbReference type="RefSeq" id="WP_003230168.1">
    <property type="nucleotide sequence ID" value="NZ_OZ025638.1"/>
</dbReference>
<dbReference type="FunCoup" id="P25958">
    <property type="interactions" value="21"/>
</dbReference>
<dbReference type="STRING" id="224308.BSU24680"/>
<dbReference type="PaxDb" id="224308-BSU24680"/>
<dbReference type="EnsemblBacteria" id="CAB14399">
    <property type="protein sequence ID" value="CAB14399"/>
    <property type="gene ID" value="BSU_24680"/>
</dbReference>
<dbReference type="GeneID" id="938530"/>
<dbReference type="KEGG" id="bsu:BSU24680"/>
<dbReference type="PATRIC" id="fig|224308.179.peg.2686"/>
<dbReference type="eggNOG" id="COG4940">
    <property type="taxonomic scope" value="Bacteria"/>
</dbReference>
<dbReference type="InParanoid" id="P25958"/>
<dbReference type="OrthoDB" id="2361316at2"/>
<dbReference type="BioCyc" id="BSUB:BSU24680-MONOMER"/>
<dbReference type="Proteomes" id="UP000001570">
    <property type="component" value="Chromosome"/>
</dbReference>
<dbReference type="GO" id="GO:0009289">
    <property type="term" value="C:pilus"/>
    <property type="evidence" value="ECO:0007669"/>
    <property type="project" value="UniProtKB-SubCell"/>
</dbReference>
<dbReference type="GO" id="GO:0005886">
    <property type="term" value="C:plasma membrane"/>
    <property type="evidence" value="ECO:0007669"/>
    <property type="project" value="UniProtKB-SubCell"/>
</dbReference>
<dbReference type="GO" id="GO:0030420">
    <property type="term" value="P:establishment of competence for transformation"/>
    <property type="evidence" value="ECO:0007669"/>
    <property type="project" value="UniProtKB-KW"/>
</dbReference>
<dbReference type="InterPro" id="IPR016977">
    <property type="entry name" value="Competence_ComGF"/>
</dbReference>
<dbReference type="NCBIfam" id="NF041002">
    <property type="entry name" value="pilin_ComGF"/>
    <property type="match status" value="1"/>
</dbReference>
<dbReference type="Pfam" id="PF15980">
    <property type="entry name" value="ComGF"/>
    <property type="match status" value="1"/>
</dbReference>
<dbReference type="PIRSF" id="PIRSF031611">
    <property type="entry name" value="Competence_ComGF"/>
    <property type="match status" value="1"/>
</dbReference>